<protein>
    <recommendedName>
        <fullName evidence="1">Small ribosomal subunit protein uS5</fullName>
    </recommendedName>
    <alternativeName>
        <fullName evidence="2">30S ribosomal protein S5</fullName>
    </alternativeName>
</protein>
<keyword id="KW-0687">Ribonucleoprotein</keyword>
<keyword id="KW-0689">Ribosomal protein</keyword>
<keyword id="KW-0694">RNA-binding</keyword>
<keyword id="KW-0699">rRNA-binding</keyword>
<name>RS5_BORBR</name>
<comment type="function">
    <text evidence="1">With S4 and S12 plays an important role in translational accuracy.</text>
</comment>
<comment type="function">
    <text evidence="1">Located at the back of the 30S subunit body where it stabilizes the conformation of the head with respect to the body.</text>
</comment>
<comment type="subunit">
    <text evidence="1">Part of the 30S ribosomal subunit. Contacts proteins S4 and S8.</text>
</comment>
<comment type="domain">
    <text>The N-terminal domain interacts with the head of the 30S subunit; the C-terminal domain interacts with the body and contacts protein S4. The interaction surface between S4 and S5 is involved in control of translational fidelity.</text>
</comment>
<comment type="similarity">
    <text evidence="1">Belongs to the universal ribosomal protein uS5 family.</text>
</comment>
<gene>
    <name evidence="1" type="primary">rpsE</name>
    <name type="ordered locus">BB0048</name>
</gene>
<accession>Q7WRA6</accession>
<reference key="1">
    <citation type="journal article" date="2003" name="Nat. Genet.">
        <title>Comparative analysis of the genome sequences of Bordetella pertussis, Bordetella parapertussis and Bordetella bronchiseptica.</title>
        <authorList>
            <person name="Parkhill J."/>
            <person name="Sebaihia M."/>
            <person name="Preston A."/>
            <person name="Murphy L.D."/>
            <person name="Thomson N.R."/>
            <person name="Harris D.E."/>
            <person name="Holden M.T.G."/>
            <person name="Churcher C.M."/>
            <person name="Bentley S.D."/>
            <person name="Mungall K.L."/>
            <person name="Cerdeno-Tarraga A.-M."/>
            <person name="Temple L."/>
            <person name="James K.D."/>
            <person name="Harris B."/>
            <person name="Quail M.A."/>
            <person name="Achtman M."/>
            <person name="Atkin R."/>
            <person name="Baker S."/>
            <person name="Basham D."/>
            <person name="Bason N."/>
            <person name="Cherevach I."/>
            <person name="Chillingworth T."/>
            <person name="Collins M."/>
            <person name="Cronin A."/>
            <person name="Davis P."/>
            <person name="Doggett J."/>
            <person name="Feltwell T."/>
            <person name="Goble A."/>
            <person name="Hamlin N."/>
            <person name="Hauser H."/>
            <person name="Holroyd S."/>
            <person name="Jagels K."/>
            <person name="Leather S."/>
            <person name="Moule S."/>
            <person name="Norberczak H."/>
            <person name="O'Neil S."/>
            <person name="Ormond D."/>
            <person name="Price C."/>
            <person name="Rabbinowitsch E."/>
            <person name="Rutter S."/>
            <person name="Sanders M."/>
            <person name="Saunders D."/>
            <person name="Seeger K."/>
            <person name="Sharp S."/>
            <person name="Simmonds M."/>
            <person name="Skelton J."/>
            <person name="Squares R."/>
            <person name="Squares S."/>
            <person name="Stevens K."/>
            <person name="Unwin L."/>
            <person name="Whitehead S."/>
            <person name="Barrell B.G."/>
            <person name="Maskell D.J."/>
        </authorList>
    </citation>
    <scope>NUCLEOTIDE SEQUENCE [LARGE SCALE GENOMIC DNA]</scope>
    <source>
        <strain>ATCC BAA-588 / NCTC 13252 / RB50</strain>
    </source>
</reference>
<sequence>MATKVQGKHAAEKENDDGLREKMIAVNRVSKVVKGGRTMSFAALSVVGDGDGRIGMGKGKAREVPVSVQKAMEQARRGMFKVALKNGTLHHTVVGKHGASTVLISPAAEGTGVIAGGPMRAIFEVMGVRNVVAKSLGSSNPYNLVRATLNGLRASLTPAEVAAKRGKSVEEILG</sequence>
<proteinExistence type="inferred from homology"/>
<feature type="chain" id="PRO_0000131476" description="Small ribosomal subunit protein uS5">
    <location>
        <begin position="1"/>
        <end position="174"/>
    </location>
</feature>
<feature type="domain" description="S5 DRBM" evidence="1">
    <location>
        <begin position="19"/>
        <end position="82"/>
    </location>
</feature>
<organism>
    <name type="scientific">Bordetella bronchiseptica (strain ATCC BAA-588 / NCTC 13252 / RB50)</name>
    <name type="common">Alcaligenes bronchisepticus</name>
    <dbReference type="NCBI Taxonomy" id="257310"/>
    <lineage>
        <taxon>Bacteria</taxon>
        <taxon>Pseudomonadati</taxon>
        <taxon>Pseudomonadota</taxon>
        <taxon>Betaproteobacteria</taxon>
        <taxon>Burkholderiales</taxon>
        <taxon>Alcaligenaceae</taxon>
        <taxon>Bordetella</taxon>
    </lineage>
</organism>
<dbReference type="EMBL" id="BX640437">
    <property type="protein sequence ID" value="CAE30550.1"/>
    <property type="molecule type" value="Genomic_DNA"/>
</dbReference>
<dbReference type="RefSeq" id="WP_003806923.1">
    <property type="nucleotide sequence ID" value="NC_002927.3"/>
</dbReference>
<dbReference type="SMR" id="Q7WRA6"/>
<dbReference type="GeneID" id="93206278"/>
<dbReference type="KEGG" id="bbr:BB0048"/>
<dbReference type="eggNOG" id="COG0098">
    <property type="taxonomic scope" value="Bacteria"/>
</dbReference>
<dbReference type="HOGENOM" id="CLU_065898_2_2_4"/>
<dbReference type="Proteomes" id="UP000001027">
    <property type="component" value="Chromosome"/>
</dbReference>
<dbReference type="GO" id="GO:0015935">
    <property type="term" value="C:small ribosomal subunit"/>
    <property type="evidence" value="ECO:0007669"/>
    <property type="project" value="InterPro"/>
</dbReference>
<dbReference type="GO" id="GO:0019843">
    <property type="term" value="F:rRNA binding"/>
    <property type="evidence" value="ECO:0007669"/>
    <property type="project" value="UniProtKB-UniRule"/>
</dbReference>
<dbReference type="GO" id="GO:0003735">
    <property type="term" value="F:structural constituent of ribosome"/>
    <property type="evidence" value="ECO:0007669"/>
    <property type="project" value="InterPro"/>
</dbReference>
<dbReference type="GO" id="GO:0006412">
    <property type="term" value="P:translation"/>
    <property type="evidence" value="ECO:0007669"/>
    <property type="project" value="UniProtKB-UniRule"/>
</dbReference>
<dbReference type="FunFam" id="3.30.160.20:FF:000001">
    <property type="entry name" value="30S ribosomal protein S5"/>
    <property type="match status" value="1"/>
</dbReference>
<dbReference type="FunFam" id="3.30.230.10:FF:000002">
    <property type="entry name" value="30S ribosomal protein S5"/>
    <property type="match status" value="1"/>
</dbReference>
<dbReference type="Gene3D" id="3.30.160.20">
    <property type="match status" value="1"/>
</dbReference>
<dbReference type="Gene3D" id="3.30.230.10">
    <property type="match status" value="1"/>
</dbReference>
<dbReference type="HAMAP" id="MF_01307_B">
    <property type="entry name" value="Ribosomal_uS5_B"/>
    <property type="match status" value="1"/>
</dbReference>
<dbReference type="InterPro" id="IPR020568">
    <property type="entry name" value="Ribosomal_Su5_D2-typ_SF"/>
</dbReference>
<dbReference type="InterPro" id="IPR000851">
    <property type="entry name" value="Ribosomal_uS5"/>
</dbReference>
<dbReference type="InterPro" id="IPR005712">
    <property type="entry name" value="Ribosomal_uS5_bac-type"/>
</dbReference>
<dbReference type="InterPro" id="IPR005324">
    <property type="entry name" value="Ribosomal_uS5_C"/>
</dbReference>
<dbReference type="InterPro" id="IPR013810">
    <property type="entry name" value="Ribosomal_uS5_N"/>
</dbReference>
<dbReference type="InterPro" id="IPR018192">
    <property type="entry name" value="Ribosomal_uS5_N_CS"/>
</dbReference>
<dbReference type="InterPro" id="IPR014721">
    <property type="entry name" value="Ribsml_uS5_D2-typ_fold_subgr"/>
</dbReference>
<dbReference type="NCBIfam" id="TIGR01021">
    <property type="entry name" value="rpsE_bact"/>
    <property type="match status" value="1"/>
</dbReference>
<dbReference type="PANTHER" id="PTHR48277">
    <property type="entry name" value="MITOCHONDRIAL RIBOSOMAL PROTEIN S5"/>
    <property type="match status" value="1"/>
</dbReference>
<dbReference type="PANTHER" id="PTHR48277:SF1">
    <property type="entry name" value="MITOCHONDRIAL RIBOSOMAL PROTEIN S5"/>
    <property type="match status" value="1"/>
</dbReference>
<dbReference type="Pfam" id="PF00333">
    <property type="entry name" value="Ribosomal_S5"/>
    <property type="match status" value="1"/>
</dbReference>
<dbReference type="Pfam" id="PF03719">
    <property type="entry name" value="Ribosomal_S5_C"/>
    <property type="match status" value="1"/>
</dbReference>
<dbReference type="SUPFAM" id="SSF54768">
    <property type="entry name" value="dsRNA-binding domain-like"/>
    <property type="match status" value="1"/>
</dbReference>
<dbReference type="SUPFAM" id="SSF54211">
    <property type="entry name" value="Ribosomal protein S5 domain 2-like"/>
    <property type="match status" value="1"/>
</dbReference>
<dbReference type="PROSITE" id="PS00585">
    <property type="entry name" value="RIBOSOMAL_S5"/>
    <property type="match status" value="1"/>
</dbReference>
<dbReference type="PROSITE" id="PS50881">
    <property type="entry name" value="S5_DSRBD"/>
    <property type="match status" value="1"/>
</dbReference>
<evidence type="ECO:0000255" key="1">
    <source>
        <dbReference type="HAMAP-Rule" id="MF_01307"/>
    </source>
</evidence>
<evidence type="ECO:0000305" key="2"/>